<name>AREL1_HUMAN</name>
<evidence type="ECO:0000255" key="1">
    <source>
        <dbReference type="PROSITE-ProRule" id="PRU00104"/>
    </source>
</evidence>
<evidence type="ECO:0000256" key="2">
    <source>
        <dbReference type="SAM" id="MobiDB-lite"/>
    </source>
</evidence>
<evidence type="ECO:0000269" key="3">
    <source>
    </source>
</evidence>
<evidence type="ECO:0000269" key="4">
    <source>
    </source>
</evidence>
<evidence type="ECO:0000269" key="5">
    <source>
    </source>
</evidence>
<evidence type="ECO:0000303" key="6">
    <source>
    </source>
</evidence>
<evidence type="ECO:0000303" key="7">
    <source>
    </source>
</evidence>
<evidence type="ECO:0000303" key="8">
    <source>
    </source>
</evidence>
<evidence type="ECO:0000305" key="9"/>
<evidence type="ECO:0000312" key="10">
    <source>
        <dbReference type="HGNC" id="HGNC:20363"/>
    </source>
</evidence>
<evidence type="ECO:0007829" key="11">
    <source>
        <dbReference type="PDB" id="6JX5"/>
    </source>
</evidence>
<evidence type="ECO:0007829" key="12">
    <source>
        <dbReference type="PDB" id="6LOH"/>
    </source>
</evidence>
<reference key="1">
    <citation type="journal article" date="1997" name="DNA Res.">
        <title>Prediction of the coding sequences of unidentified human genes. VII. The complete sequences of 100 new cDNA clones from brain which can code for large proteins in vitro.</title>
        <authorList>
            <person name="Nagase T."/>
            <person name="Ishikawa K."/>
            <person name="Nakajima D."/>
            <person name="Ohira M."/>
            <person name="Seki N."/>
            <person name="Miyajima N."/>
            <person name="Tanaka A."/>
            <person name="Kotani H."/>
            <person name="Nomura N."/>
            <person name="Ohara O."/>
        </authorList>
    </citation>
    <scope>NUCLEOTIDE SEQUENCE [LARGE SCALE MRNA] (ISOFORM 1)</scope>
    <source>
        <tissue>Brain</tissue>
    </source>
</reference>
<reference key="2">
    <citation type="journal article" date="2004" name="Nat. Genet.">
        <title>Complete sequencing and characterization of 21,243 full-length human cDNAs.</title>
        <authorList>
            <person name="Ota T."/>
            <person name="Suzuki Y."/>
            <person name="Nishikawa T."/>
            <person name="Otsuki T."/>
            <person name="Sugiyama T."/>
            <person name="Irie R."/>
            <person name="Wakamatsu A."/>
            <person name="Hayashi K."/>
            <person name="Sato H."/>
            <person name="Nagai K."/>
            <person name="Kimura K."/>
            <person name="Makita H."/>
            <person name="Sekine M."/>
            <person name="Obayashi M."/>
            <person name="Nishi T."/>
            <person name="Shibahara T."/>
            <person name="Tanaka T."/>
            <person name="Ishii S."/>
            <person name="Yamamoto J."/>
            <person name="Saito K."/>
            <person name="Kawai Y."/>
            <person name="Isono Y."/>
            <person name="Nakamura Y."/>
            <person name="Nagahari K."/>
            <person name="Murakami K."/>
            <person name="Yasuda T."/>
            <person name="Iwayanagi T."/>
            <person name="Wagatsuma M."/>
            <person name="Shiratori A."/>
            <person name="Sudo H."/>
            <person name="Hosoiri T."/>
            <person name="Kaku Y."/>
            <person name="Kodaira H."/>
            <person name="Kondo H."/>
            <person name="Sugawara M."/>
            <person name="Takahashi M."/>
            <person name="Kanda K."/>
            <person name="Yokoi T."/>
            <person name="Furuya T."/>
            <person name="Kikkawa E."/>
            <person name="Omura Y."/>
            <person name="Abe K."/>
            <person name="Kamihara K."/>
            <person name="Katsuta N."/>
            <person name="Sato K."/>
            <person name="Tanikawa M."/>
            <person name="Yamazaki M."/>
            <person name="Ninomiya K."/>
            <person name="Ishibashi T."/>
            <person name="Yamashita H."/>
            <person name="Murakawa K."/>
            <person name="Fujimori K."/>
            <person name="Tanai H."/>
            <person name="Kimata M."/>
            <person name="Watanabe M."/>
            <person name="Hiraoka S."/>
            <person name="Chiba Y."/>
            <person name="Ishida S."/>
            <person name="Ono Y."/>
            <person name="Takiguchi S."/>
            <person name="Watanabe S."/>
            <person name="Yosida M."/>
            <person name="Hotuta T."/>
            <person name="Kusano J."/>
            <person name="Kanehori K."/>
            <person name="Takahashi-Fujii A."/>
            <person name="Hara H."/>
            <person name="Tanase T.-O."/>
            <person name="Nomura Y."/>
            <person name="Togiya S."/>
            <person name="Komai F."/>
            <person name="Hara R."/>
            <person name="Takeuchi K."/>
            <person name="Arita M."/>
            <person name="Imose N."/>
            <person name="Musashino K."/>
            <person name="Yuuki H."/>
            <person name="Oshima A."/>
            <person name="Sasaki N."/>
            <person name="Aotsuka S."/>
            <person name="Yoshikawa Y."/>
            <person name="Matsunawa H."/>
            <person name="Ichihara T."/>
            <person name="Shiohata N."/>
            <person name="Sano S."/>
            <person name="Moriya S."/>
            <person name="Momiyama H."/>
            <person name="Satoh N."/>
            <person name="Takami S."/>
            <person name="Terashima Y."/>
            <person name="Suzuki O."/>
            <person name="Nakagawa S."/>
            <person name="Senoh A."/>
            <person name="Mizoguchi H."/>
            <person name="Goto Y."/>
            <person name="Shimizu F."/>
            <person name="Wakebe H."/>
            <person name="Hishigaki H."/>
            <person name="Watanabe T."/>
            <person name="Sugiyama A."/>
            <person name="Takemoto M."/>
            <person name="Kawakami B."/>
            <person name="Yamazaki M."/>
            <person name="Watanabe K."/>
            <person name="Kumagai A."/>
            <person name="Itakura S."/>
            <person name="Fukuzumi Y."/>
            <person name="Fujimori Y."/>
            <person name="Komiyama M."/>
            <person name="Tashiro H."/>
            <person name="Tanigami A."/>
            <person name="Fujiwara T."/>
            <person name="Ono T."/>
            <person name="Yamada K."/>
            <person name="Fujii Y."/>
            <person name="Ozaki K."/>
            <person name="Hirao M."/>
            <person name="Ohmori Y."/>
            <person name="Kawabata A."/>
            <person name="Hikiji T."/>
            <person name="Kobatake N."/>
            <person name="Inagaki H."/>
            <person name="Ikema Y."/>
            <person name="Okamoto S."/>
            <person name="Okitani R."/>
            <person name="Kawakami T."/>
            <person name="Noguchi S."/>
            <person name="Itoh T."/>
            <person name="Shigeta K."/>
            <person name="Senba T."/>
            <person name="Matsumura K."/>
            <person name="Nakajima Y."/>
            <person name="Mizuno T."/>
            <person name="Morinaga M."/>
            <person name="Sasaki M."/>
            <person name="Togashi T."/>
            <person name="Oyama M."/>
            <person name="Hata H."/>
            <person name="Watanabe M."/>
            <person name="Komatsu T."/>
            <person name="Mizushima-Sugano J."/>
            <person name="Satoh T."/>
            <person name="Shirai Y."/>
            <person name="Takahashi Y."/>
            <person name="Nakagawa K."/>
            <person name="Okumura K."/>
            <person name="Nagase T."/>
            <person name="Nomura N."/>
            <person name="Kikuchi H."/>
            <person name="Masuho Y."/>
            <person name="Yamashita R."/>
            <person name="Nakai K."/>
            <person name="Yada T."/>
            <person name="Nakamura Y."/>
            <person name="Ohara O."/>
            <person name="Isogai T."/>
            <person name="Sugano S."/>
        </authorList>
    </citation>
    <scope>NUCLEOTIDE SEQUENCE [LARGE SCALE MRNA] (ISOFORM 1)</scope>
    <source>
        <tissue>Trachea</tissue>
    </source>
</reference>
<reference key="3">
    <citation type="journal article" date="2003" name="Nature">
        <title>The DNA sequence and analysis of human chromosome 14.</title>
        <authorList>
            <person name="Heilig R."/>
            <person name="Eckenberg R."/>
            <person name="Petit J.-L."/>
            <person name="Fonknechten N."/>
            <person name="Da Silva C."/>
            <person name="Cattolico L."/>
            <person name="Levy M."/>
            <person name="Barbe V."/>
            <person name="De Berardinis V."/>
            <person name="Ureta-Vidal A."/>
            <person name="Pelletier E."/>
            <person name="Vico V."/>
            <person name="Anthouard V."/>
            <person name="Rowen L."/>
            <person name="Madan A."/>
            <person name="Qin S."/>
            <person name="Sun H."/>
            <person name="Du H."/>
            <person name="Pepin K."/>
            <person name="Artiguenave F."/>
            <person name="Robert C."/>
            <person name="Cruaud C."/>
            <person name="Bruels T."/>
            <person name="Jaillon O."/>
            <person name="Friedlander L."/>
            <person name="Samson G."/>
            <person name="Brottier P."/>
            <person name="Cure S."/>
            <person name="Segurens B."/>
            <person name="Aniere F."/>
            <person name="Samain S."/>
            <person name="Crespeau H."/>
            <person name="Abbasi N."/>
            <person name="Aiach N."/>
            <person name="Boscus D."/>
            <person name="Dickhoff R."/>
            <person name="Dors M."/>
            <person name="Dubois I."/>
            <person name="Friedman C."/>
            <person name="Gouyvenoux M."/>
            <person name="James R."/>
            <person name="Madan A."/>
            <person name="Mairey-Estrada B."/>
            <person name="Mangenot S."/>
            <person name="Martins N."/>
            <person name="Menard M."/>
            <person name="Oztas S."/>
            <person name="Ratcliffe A."/>
            <person name="Shaffer T."/>
            <person name="Trask B."/>
            <person name="Vacherie B."/>
            <person name="Bellemere C."/>
            <person name="Belser C."/>
            <person name="Besnard-Gonnet M."/>
            <person name="Bartol-Mavel D."/>
            <person name="Boutard M."/>
            <person name="Briez-Silla S."/>
            <person name="Combette S."/>
            <person name="Dufosse-Laurent V."/>
            <person name="Ferron C."/>
            <person name="Lechaplais C."/>
            <person name="Louesse C."/>
            <person name="Muselet D."/>
            <person name="Magdelenat G."/>
            <person name="Pateau E."/>
            <person name="Petit E."/>
            <person name="Sirvain-Trukniewicz P."/>
            <person name="Trybou A."/>
            <person name="Vega-Czarny N."/>
            <person name="Bataille E."/>
            <person name="Bluet E."/>
            <person name="Bordelais I."/>
            <person name="Dubois M."/>
            <person name="Dumont C."/>
            <person name="Guerin T."/>
            <person name="Haffray S."/>
            <person name="Hammadi R."/>
            <person name="Muanga J."/>
            <person name="Pellouin V."/>
            <person name="Robert D."/>
            <person name="Wunderle E."/>
            <person name="Gauguet G."/>
            <person name="Roy A."/>
            <person name="Sainte-Marthe L."/>
            <person name="Verdier J."/>
            <person name="Verdier-Discala C."/>
            <person name="Hillier L.W."/>
            <person name="Fulton L."/>
            <person name="McPherson J."/>
            <person name="Matsuda F."/>
            <person name="Wilson R."/>
            <person name="Scarpelli C."/>
            <person name="Gyapay G."/>
            <person name="Wincker P."/>
            <person name="Saurin W."/>
            <person name="Quetier F."/>
            <person name="Waterston R."/>
            <person name="Hood L."/>
            <person name="Weissenbach J."/>
        </authorList>
    </citation>
    <scope>NUCLEOTIDE SEQUENCE [LARGE SCALE GENOMIC DNA]</scope>
</reference>
<reference key="4">
    <citation type="submission" date="2005-07" db="EMBL/GenBank/DDBJ databases">
        <authorList>
            <person name="Mural R.J."/>
            <person name="Istrail S."/>
            <person name="Sutton G.G."/>
            <person name="Florea L."/>
            <person name="Halpern A.L."/>
            <person name="Mobarry C.M."/>
            <person name="Lippert R."/>
            <person name="Walenz B."/>
            <person name="Shatkay H."/>
            <person name="Dew I."/>
            <person name="Miller J.R."/>
            <person name="Flanigan M.J."/>
            <person name="Edwards N.J."/>
            <person name="Bolanos R."/>
            <person name="Fasulo D."/>
            <person name="Halldorsson B.V."/>
            <person name="Hannenhalli S."/>
            <person name="Turner R."/>
            <person name="Yooseph S."/>
            <person name="Lu F."/>
            <person name="Nusskern D.R."/>
            <person name="Shue B.C."/>
            <person name="Zheng X.H."/>
            <person name="Zhong F."/>
            <person name="Delcher A.L."/>
            <person name="Huson D.H."/>
            <person name="Kravitz S.A."/>
            <person name="Mouchard L."/>
            <person name="Reinert K."/>
            <person name="Remington K.A."/>
            <person name="Clark A.G."/>
            <person name="Waterman M.S."/>
            <person name="Eichler E.E."/>
            <person name="Adams M.D."/>
            <person name="Hunkapiller M.W."/>
            <person name="Myers E.W."/>
            <person name="Venter J.C."/>
        </authorList>
    </citation>
    <scope>NUCLEOTIDE SEQUENCE [LARGE SCALE GENOMIC DNA]</scope>
</reference>
<reference key="5">
    <citation type="journal article" date="2004" name="Genome Res.">
        <title>The status, quality, and expansion of the NIH full-length cDNA project: the Mammalian Gene Collection (MGC).</title>
        <authorList>
            <consortium name="The MGC Project Team"/>
        </authorList>
    </citation>
    <scope>NUCLEOTIDE SEQUENCE [LARGE SCALE MRNA] (ISOFORM 2)</scope>
    <source>
        <tissue>Testis</tissue>
    </source>
</reference>
<reference key="6">
    <citation type="journal article" date="2013" name="J. Biol. Chem.">
        <title>Identification of a novel anti-apoptotic E3 ubiquitin ligase that ubiquitinates antagonists of inhibitor of apoptosis proteins SMAC, HtrA2, and ARTS.</title>
        <authorList>
            <person name="Kim J.B."/>
            <person name="Kim S.Y."/>
            <person name="Kim B.M."/>
            <person name="Lee H."/>
            <person name="Kim I."/>
            <person name="Yun J."/>
            <person name="Jo Y."/>
            <person name="Oh T."/>
            <person name="Jo Y."/>
            <person name="Chae H.D."/>
            <person name="Shin D.Y."/>
        </authorList>
    </citation>
    <scope>FUNCTION</scope>
    <scope>CATALYTIC ACTIVITY</scope>
    <scope>PATHWAY</scope>
    <scope>INTERACTION WITH SEPTIN4; HTRA2 AND DIABLO</scope>
    <scope>ACTIVE SITE</scope>
    <scope>AUTOUBIQUITINATION</scope>
    <scope>MUTAGENESIS OF CYS-790</scope>
</reference>
<reference key="7">
    <citation type="journal article" date="2015" name="Mol. Cell">
        <title>Assembly and specific recognition of K29- and K33-linked polyubiquitin.</title>
        <authorList>
            <person name="Michel M.A."/>
            <person name="Elliott P.R."/>
            <person name="Swatek K.N."/>
            <person name="Simicek M."/>
            <person name="Pruneda J.N."/>
            <person name="Wagstaff J.L."/>
            <person name="Freund S.M."/>
            <person name="Komander D."/>
        </authorList>
    </citation>
    <scope>FUNCTION</scope>
    <scope>CATALYTIC ACTIVITY</scope>
    <scope>PATHWAY</scope>
</reference>
<reference key="8">
    <citation type="journal article" date="2019" name="JCI Insight">
        <title>KIAA0317 regulates pulmonary inflammation through SOCS2 degradation.</title>
        <authorList>
            <person name="Lear T.B."/>
            <person name="McKelvey A.C."/>
            <person name="Evankovich J.W."/>
            <person name="Rajbhandari S."/>
            <person name="Coon T.A."/>
            <person name="Dunn S.R."/>
            <person name="Londino J.D."/>
            <person name="McVerry B.J."/>
            <person name="Zhang Y."/>
            <person name="Valenzi E."/>
            <person name="Burton C.L."/>
            <person name="Gordon R."/>
            <person name="Gingras S."/>
            <person name="Lockwood K.C."/>
            <person name="Jurczak M.J."/>
            <person name="Lafyatis R."/>
            <person name="Shlomchik M.J."/>
            <person name="Liu Y."/>
            <person name="Chen B.B."/>
        </authorList>
    </citation>
    <scope>FUNCTION</scope>
    <scope>INTERACTION WITH SOCS2</scope>
    <scope>CHARACTERIZATION OF VARIANT LEU-779</scope>
</reference>
<proteinExistence type="evidence at protein level"/>
<gene>
    <name evidence="7 10" type="primary">AREL1</name>
    <name evidence="8" type="synonym">KIAA0317</name>
</gene>
<sequence length="823" mass="94223">MFYVIGGITVSVVAFFFTIKFLFELAARVVSFLQNEDRERRGDRTIYDYVRGNYLDPRSCKVSWDWKDPYEVGHSMAFRVHLFYKNGQPFPAHRPVGLRVHISHVELAVEIPVTQEVLQEPNSNVVKVAFTVRKAGRYEITVKLGGLNVAYSPYYKIFQPGMVVPSKTKIVCHFSTLVLTCGQPHTLQIVPRDEYDNPTNNSMSLRDEHNYTLSIHELGPQEEESTGVSFEKSVTSNRQTFQVFLRLTLHSRGCFHACISYQNQPINNGEFDIIVLSEDEKNIVERNVSTSGVSIYFEAYLYNATNCSSTPWHLPPMHMTSSQRRPSTAVDEEDEDSPSECHTPEKVKKPKKVYCYVSPKQFSVKEFYLKIIPWRLYTFRVCPGTKFSYLGPDPVHKLLTLVVDDGIQPPVELSCKERNILAATFIRSLHKNIGGSETFQDKVNFFQRELRQVHMKRPHSKVTLKVSRHALLESSLKATRNFSISDWSKNFEVVFQDEEALDWGGPRREWFELICKALFDTTNQLFTRFSDNNQALVHPNPNRPAHLRLKMYEFAGRLVGKCLYESSLGGAYKQLVRARFTRSFLAQIIGLRMHYKYFETDDPEFYKSKVCFILNNDMSEMELVFAEEKYNKSGQLDKVVELMTGGAQTPVTNANKIFYLNLLAQYRLASQVKEEVEHFLKGLNELVPENLLAIFDENELELLMCGTGDISVSDFKAHAVVVGGSWHFREKVMRWFWTVVSSLTQEELARLLQFTTGSSQLPPGGFAALCPSFQIIAAPTHSTLPTAHTCFNQLCLPTYDSYEEVHRMLQLAISEGCEGFGML</sequence>
<comment type="function">
    <text evidence="3 4 5">E3 ubiquitin-protein ligase that catalyzes 'Lys-11'- or 'Lys-33'-linked polyubiquitin chains, with some preference for 'Lys-33' linkages (PubMed:25752577). E3 ubiquitin-protein ligases accept ubiquitin from an E2 ubiquitin-conjugating enzyme in the form of a thioester and then directly transfers the ubiquitin to targeted substrates (PubMed:23479728, PubMed:31578312). Ubiquitinates SEPTIN4, DIABLO/SMAC and HTRA2 in vitro (PubMed:23479728). Modulates pulmonary inflammation by targeting SOCS2 for ubiquitination and subsequent degradation by the proteasome (PubMed:31578312).</text>
</comment>
<comment type="catalytic activity">
    <reaction evidence="3 4">
        <text>S-ubiquitinyl-[E2 ubiquitin-conjugating enzyme]-L-cysteine + [acceptor protein]-L-lysine = [E2 ubiquitin-conjugating enzyme]-L-cysteine + N(6)-ubiquitinyl-[acceptor protein]-L-lysine.</text>
        <dbReference type="EC" id="2.3.2.26"/>
    </reaction>
</comment>
<comment type="pathway">
    <text evidence="3 4">Protein modification; protein ubiquitination.</text>
</comment>
<comment type="subunit">
    <text evidence="3 5">Interacts with SOCS2 (PubMed:31578312). Interacts (via HECT domain) with HTRA2, DIABLO/SMAC and SEPTIN4; in the cytoplasm following induction of apoptosis (PubMed:23479728).</text>
</comment>
<comment type="alternative products">
    <event type="alternative splicing"/>
    <isoform>
        <id>O15033-1</id>
        <name>1</name>
        <sequence type="displayed"/>
    </isoform>
    <isoform>
        <id>O15033-2</id>
        <name>2</name>
        <sequence type="described" ref="VSP_013259"/>
    </isoform>
</comment>
<comment type="PTM">
    <text evidence="3">Autoubiquitinated in vitro in the presence of E2 enzyme UBE2D1/UBCH5A.</text>
</comment>
<comment type="sequence caution" evidence="9">
    <conflict type="erroneous initiation">
        <sequence resource="EMBL-CDS" id="BAA20775"/>
    </conflict>
    <text>Extended N-terminus.</text>
</comment>
<dbReference type="EC" id="2.3.2.26" evidence="3 4"/>
<dbReference type="EMBL" id="AB002315">
    <property type="protein sequence ID" value="BAA20775.2"/>
    <property type="status" value="ALT_INIT"/>
    <property type="molecule type" value="mRNA"/>
</dbReference>
<dbReference type="EMBL" id="AK304217">
    <property type="protein sequence ID" value="BAG65089.1"/>
    <property type="molecule type" value="mRNA"/>
</dbReference>
<dbReference type="EMBL" id="AC007956">
    <property type="protein sequence ID" value="AAF61276.1"/>
    <property type="molecule type" value="Genomic_DNA"/>
</dbReference>
<dbReference type="EMBL" id="CH471061">
    <property type="protein sequence ID" value="EAW81186.1"/>
    <property type="molecule type" value="Genomic_DNA"/>
</dbReference>
<dbReference type="EMBL" id="BC032944">
    <property type="protein sequence ID" value="AAH32944.1"/>
    <property type="molecule type" value="mRNA"/>
</dbReference>
<dbReference type="CCDS" id="CCDS41971.1">
    <molecule id="O15033-1"/>
</dbReference>
<dbReference type="RefSeq" id="NP_001034568.1">
    <molecule id="O15033-1"/>
    <property type="nucleotide sequence ID" value="NM_001039479.2"/>
</dbReference>
<dbReference type="RefSeq" id="XP_011535717.1">
    <molecule id="O15033-1"/>
    <property type="nucleotide sequence ID" value="XM_011537415.3"/>
</dbReference>
<dbReference type="RefSeq" id="XP_054233114.1">
    <molecule id="O15033-1"/>
    <property type="nucleotide sequence ID" value="XM_054377139.1"/>
</dbReference>
<dbReference type="PDB" id="6JX5">
    <property type="method" value="X-ray"/>
    <property type="resolution" value="2.40 A"/>
    <property type="chains" value="A/B/C=436-823"/>
</dbReference>
<dbReference type="PDB" id="6LOH">
    <property type="method" value="X-ray"/>
    <property type="resolution" value="3.21 A"/>
    <property type="chains" value="A/B/C=435-811"/>
</dbReference>
<dbReference type="PDBsum" id="6JX5"/>
<dbReference type="PDBsum" id="6LOH"/>
<dbReference type="SMR" id="O15033"/>
<dbReference type="BioGRID" id="115203">
    <property type="interactions" value="37"/>
</dbReference>
<dbReference type="FunCoup" id="O15033">
    <property type="interactions" value="2825"/>
</dbReference>
<dbReference type="IntAct" id="O15033">
    <property type="interactions" value="15"/>
</dbReference>
<dbReference type="STRING" id="9606.ENSP00000348714"/>
<dbReference type="iPTMnet" id="O15033"/>
<dbReference type="PhosphoSitePlus" id="O15033"/>
<dbReference type="BioMuta" id="AREL1"/>
<dbReference type="jPOST" id="O15033"/>
<dbReference type="MassIVE" id="O15033"/>
<dbReference type="PaxDb" id="9606-ENSP00000348714"/>
<dbReference type="PeptideAtlas" id="O15033"/>
<dbReference type="ProteomicsDB" id="48389">
    <molecule id="O15033-1"/>
</dbReference>
<dbReference type="ProteomicsDB" id="48390">
    <molecule id="O15033-2"/>
</dbReference>
<dbReference type="Antibodypedia" id="25651">
    <property type="antibodies" value="59 antibodies from 17 providers"/>
</dbReference>
<dbReference type="DNASU" id="9870"/>
<dbReference type="Ensembl" id="ENST00000356357.9">
    <molecule id="O15033-1"/>
    <property type="protein sequence ID" value="ENSP00000348714.4"/>
    <property type="gene ID" value="ENSG00000119682.18"/>
</dbReference>
<dbReference type="Ensembl" id="ENST00000681599.1">
    <molecule id="O15033-1"/>
    <property type="protein sequence ID" value="ENSP00000505623.1"/>
    <property type="gene ID" value="ENSG00000119682.18"/>
</dbReference>
<dbReference type="GeneID" id="9870"/>
<dbReference type="KEGG" id="hsa:9870"/>
<dbReference type="MANE-Select" id="ENST00000356357.9">
    <property type="protein sequence ID" value="ENSP00000348714.4"/>
    <property type="RefSeq nucleotide sequence ID" value="NM_001039479.2"/>
    <property type="RefSeq protein sequence ID" value="NP_001034568.1"/>
</dbReference>
<dbReference type="UCSC" id="uc001xqb.4">
    <molecule id="O15033-1"/>
    <property type="organism name" value="human"/>
</dbReference>
<dbReference type="AGR" id="HGNC:20363"/>
<dbReference type="CTD" id="9870"/>
<dbReference type="DisGeNET" id="9870"/>
<dbReference type="GeneCards" id="AREL1"/>
<dbReference type="HGNC" id="HGNC:20363">
    <property type="gene designation" value="AREL1"/>
</dbReference>
<dbReference type="HPA" id="ENSG00000119682">
    <property type="expression patterns" value="Low tissue specificity"/>
</dbReference>
<dbReference type="MalaCards" id="AREL1"/>
<dbReference type="MIM" id="615380">
    <property type="type" value="gene"/>
</dbReference>
<dbReference type="neXtProt" id="NX_O15033"/>
<dbReference type="OpenTargets" id="ENSG00000119682"/>
<dbReference type="PharmGKB" id="PA134985474"/>
<dbReference type="VEuPathDB" id="HostDB:ENSG00000119682"/>
<dbReference type="eggNOG" id="KOG0939">
    <property type="taxonomic scope" value="Eukaryota"/>
</dbReference>
<dbReference type="GeneTree" id="ENSGT00940000156723"/>
<dbReference type="InParanoid" id="O15033"/>
<dbReference type="OMA" id="GHLCKDA"/>
<dbReference type="OrthoDB" id="6057829at2759"/>
<dbReference type="PAN-GO" id="O15033">
    <property type="GO annotations" value="5 GO annotations based on evolutionary models"/>
</dbReference>
<dbReference type="PhylomeDB" id="O15033"/>
<dbReference type="TreeFam" id="TF323417"/>
<dbReference type="BRENDA" id="2.3.2.26">
    <property type="organism ID" value="2681"/>
</dbReference>
<dbReference type="PathwayCommons" id="O15033"/>
<dbReference type="Reactome" id="R-HSA-983168">
    <property type="pathway name" value="Antigen processing: Ubiquitination &amp; Proteasome degradation"/>
</dbReference>
<dbReference type="SignaLink" id="O15033"/>
<dbReference type="SIGNOR" id="O15033"/>
<dbReference type="UniPathway" id="UPA00143"/>
<dbReference type="BioGRID-ORCS" id="9870">
    <property type="hits" value="25 hits in 1192 CRISPR screens"/>
</dbReference>
<dbReference type="ChiTaRS" id="AREL1">
    <property type="organism name" value="human"/>
</dbReference>
<dbReference type="GenomeRNAi" id="9870"/>
<dbReference type="Pharos" id="O15033">
    <property type="development level" value="Tbio"/>
</dbReference>
<dbReference type="PRO" id="PR:O15033"/>
<dbReference type="Proteomes" id="UP000005640">
    <property type="component" value="Chromosome 14"/>
</dbReference>
<dbReference type="RNAct" id="O15033">
    <property type="molecule type" value="protein"/>
</dbReference>
<dbReference type="Bgee" id="ENSG00000119682">
    <property type="expression patterns" value="Expressed in male germ line stem cell (sensu Vertebrata) in testis and 178 other cell types or tissues"/>
</dbReference>
<dbReference type="ExpressionAtlas" id="O15033">
    <property type="expression patterns" value="baseline and differential"/>
</dbReference>
<dbReference type="GO" id="GO:0005737">
    <property type="term" value="C:cytoplasm"/>
    <property type="evidence" value="ECO:0000318"/>
    <property type="project" value="GO_Central"/>
</dbReference>
<dbReference type="GO" id="GO:0005829">
    <property type="term" value="C:cytosol"/>
    <property type="evidence" value="ECO:0000314"/>
    <property type="project" value="UniProtKB"/>
</dbReference>
<dbReference type="GO" id="GO:0061630">
    <property type="term" value="F:ubiquitin protein ligase activity"/>
    <property type="evidence" value="ECO:0000314"/>
    <property type="project" value="UniProtKB"/>
</dbReference>
<dbReference type="GO" id="GO:0004842">
    <property type="term" value="F:ubiquitin-protein transferase activity"/>
    <property type="evidence" value="ECO:0000314"/>
    <property type="project" value="UniProtKB"/>
</dbReference>
<dbReference type="GO" id="GO:0006915">
    <property type="term" value="P:apoptotic process"/>
    <property type="evidence" value="ECO:0007669"/>
    <property type="project" value="UniProtKB-KW"/>
</dbReference>
<dbReference type="GO" id="GO:0043066">
    <property type="term" value="P:negative regulation of apoptotic process"/>
    <property type="evidence" value="ECO:0000314"/>
    <property type="project" value="UniProtKB"/>
</dbReference>
<dbReference type="GO" id="GO:0070979">
    <property type="term" value="P:protein K11-linked ubiquitination"/>
    <property type="evidence" value="ECO:0000314"/>
    <property type="project" value="UniProtKB"/>
</dbReference>
<dbReference type="GO" id="GO:1990390">
    <property type="term" value="P:protein K33-linked ubiquitination"/>
    <property type="evidence" value="ECO:0000314"/>
    <property type="project" value="UniProtKB"/>
</dbReference>
<dbReference type="GO" id="GO:0016567">
    <property type="term" value="P:protein ubiquitination"/>
    <property type="evidence" value="ECO:0000314"/>
    <property type="project" value="UniProtKB"/>
</dbReference>
<dbReference type="GO" id="GO:0050727">
    <property type="term" value="P:regulation of inflammatory response"/>
    <property type="evidence" value="ECO:0000250"/>
    <property type="project" value="UniProtKB"/>
</dbReference>
<dbReference type="GO" id="GO:0006511">
    <property type="term" value="P:ubiquitin-dependent protein catabolic process"/>
    <property type="evidence" value="ECO:0000314"/>
    <property type="project" value="UniProtKB"/>
</dbReference>
<dbReference type="CDD" id="cd00078">
    <property type="entry name" value="HECTc"/>
    <property type="match status" value="1"/>
</dbReference>
<dbReference type="FunFam" id="2.60.40.10:FF:000330">
    <property type="entry name" value="Apoptosis resistant E3 ubiquitin protein ligase 1"/>
    <property type="match status" value="1"/>
</dbReference>
<dbReference type="FunFam" id="3.30.2160.10:FF:000008">
    <property type="entry name" value="Apoptosis-resistant E3 ubiquitin protein ligase 1"/>
    <property type="match status" value="1"/>
</dbReference>
<dbReference type="FunFam" id="3.30.2410.10:FF:000013">
    <property type="entry name" value="Apoptosis-resistant E3 ubiquitin protein ligase 1"/>
    <property type="match status" value="1"/>
</dbReference>
<dbReference type="FunFam" id="3.90.1750.10:FF:000013">
    <property type="entry name" value="Apoptosis-resistant E3 ubiquitin protein ligase 1"/>
    <property type="match status" value="1"/>
</dbReference>
<dbReference type="Gene3D" id="3.30.2160.10">
    <property type="entry name" value="Hect, E3 ligase catalytic domain"/>
    <property type="match status" value="1"/>
</dbReference>
<dbReference type="Gene3D" id="3.30.2410.10">
    <property type="entry name" value="Hect, E3 ligase catalytic domain"/>
    <property type="match status" value="1"/>
</dbReference>
<dbReference type="Gene3D" id="3.90.1750.10">
    <property type="entry name" value="Hect, E3 ligase catalytic domains"/>
    <property type="match status" value="1"/>
</dbReference>
<dbReference type="Gene3D" id="2.60.40.10">
    <property type="entry name" value="Immunoglobulins"/>
    <property type="match status" value="1"/>
</dbReference>
<dbReference type="InterPro" id="IPR050409">
    <property type="entry name" value="E3_ubiq-protein_ligase"/>
</dbReference>
<dbReference type="InterPro" id="IPR017868">
    <property type="entry name" value="Filamin/ABP280_repeat-like"/>
</dbReference>
<dbReference type="InterPro" id="IPR000569">
    <property type="entry name" value="HECT_dom"/>
</dbReference>
<dbReference type="InterPro" id="IPR035983">
    <property type="entry name" value="Hect_E3_ubiquitin_ligase"/>
</dbReference>
<dbReference type="InterPro" id="IPR013783">
    <property type="entry name" value="Ig-like_fold"/>
</dbReference>
<dbReference type="InterPro" id="IPR014756">
    <property type="entry name" value="Ig_E-set"/>
</dbReference>
<dbReference type="PANTHER" id="PTHR11254:SF340">
    <property type="entry name" value="APOPTOSIS-RESISTANT E3 UBIQUITIN PROTEIN LIGASE 1"/>
    <property type="match status" value="1"/>
</dbReference>
<dbReference type="PANTHER" id="PTHR11254">
    <property type="entry name" value="HECT DOMAIN UBIQUITIN-PROTEIN LIGASE"/>
    <property type="match status" value="1"/>
</dbReference>
<dbReference type="Pfam" id="PF00630">
    <property type="entry name" value="Filamin"/>
    <property type="match status" value="1"/>
</dbReference>
<dbReference type="Pfam" id="PF00632">
    <property type="entry name" value="HECT"/>
    <property type="match status" value="1"/>
</dbReference>
<dbReference type="SMART" id="SM00119">
    <property type="entry name" value="HECTc"/>
    <property type="match status" value="1"/>
</dbReference>
<dbReference type="SUPFAM" id="SSF81296">
    <property type="entry name" value="E set domains"/>
    <property type="match status" value="1"/>
</dbReference>
<dbReference type="SUPFAM" id="SSF56204">
    <property type="entry name" value="Hect, E3 ligase catalytic domain"/>
    <property type="match status" value="1"/>
</dbReference>
<dbReference type="PROSITE" id="PS50194">
    <property type="entry name" value="FILAMIN_REPEAT"/>
    <property type="match status" value="1"/>
</dbReference>
<dbReference type="PROSITE" id="PS50237">
    <property type="entry name" value="HECT"/>
    <property type="match status" value="1"/>
</dbReference>
<protein>
    <recommendedName>
        <fullName evidence="9">Apoptosis-resistant E3 ubiquitin protein ligase 1</fullName>
        <ecNumber evidence="3 4">2.3.2.26</ecNumber>
    </recommendedName>
    <alternativeName>
        <fullName evidence="7">Apoptosis-resistant HECT-type E3 ubiquitin transferase 1</fullName>
    </alternativeName>
</protein>
<feature type="chain" id="PRO_0000120349" description="Apoptosis-resistant E3 ubiquitin protein ligase 1">
    <location>
        <begin position="1"/>
        <end position="823"/>
    </location>
</feature>
<feature type="repeat" description="Filamin">
    <location>
        <begin position="52"/>
        <end position="158"/>
    </location>
</feature>
<feature type="domain" description="HECT" evidence="1">
    <location>
        <begin position="483"/>
        <end position="823"/>
    </location>
</feature>
<feature type="region of interest" description="Disordered" evidence="2">
    <location>
        <begin position="315"/>
        <end position="345"/>
    </location>
</feature>
<feature type="region of interest" description="Interaction with SOCS2" evidence="5">
    <location>
        <begin position="483"/>
        <end position="789"/>
    </location>
</feature>
<feature type="active site" description="Glycyl thioester intermediate" evidence="1 3">
    <location>
        <position position="790"/>
    </location>
</feature>
<feature type="splice variant" id="VSP_013259" description="In isoform 2." evidence="6">
    <location>
        <begin position="790"/>
        <end position="823"/>
    </location>
</feature>
<feature type="sequence variant" id="VAR_083342" description="Loss of interaction with SOCS2; dbSNP:rs371610162." evidence="5">
    <original>P</original>
    <variation>L</variation>
    <location>
        <position position="779"/>
    </location>
</feature>
<feature type="mutagenesis site" description="Failure to form ubiquitin thioester complex." evidence="3">
    <original>C</original>
    <variation>A</variation>
    <location>
        <position position="790"/>
    </location>
</feature>
<feature type="sequence conflict" description="In Ref. 5; AAH32944." evidence="9" ref="5">
    <original>T</original>
    <variation>N</variation>
    <location>
        <position position="114"/>
    </location>
</feature>
<feature type="sequence conflict" description="In Ref. 5; AAH32944." evidence="9" ref="5">
    <original>P</original>
    <variation>H</variation>
    <location>
        <position position="373"/>
    </location>
</feature>
<feature type="helix" evidence="11">
    <location>
        <begin position="439"/>
        <end position="453"/>
    </location>
</feature>
<feature type="turn" evidence="11">
    <location>
        <begin position="454"/>
        <end position="456"/>
    </location>
</feature>
<feature type="strand" evidence="11">
    <location>
        <begin position="461"/>
        <end position="466"/>
    </location>
</feature>
<feature type="helix" evidence="11">
    <location>
        <begin position="471"/>
        <end position="478"/>
    </location>
</feature>
<feature type="turn" evidence="11">
    <location>
        <begin position="479"/>
        <end position="481"/>
    </location>
</feature>
<feature type="helix" evidence="11">
    <location>
        <begin position="485"/>
        <end position="488"/>
    </location>
</feature>
<feature type="strand" evidence="11">
    <location>
        <begin position="489"/>
        <end position="495"/>
    </location>
</feature>
<feature type="strand" evidence="12">
    <location>
        <begin position="500"/>
        <end position="503"/>
    </location>
</feature>
<feature type="helix" evidence="11">
    <location>
        <begin position="504"/>
        <end position="519"/>
    </location>
</feature>
<feature type="strand" evidence="11">
    <location>
        <begin position="524"/>
        <end position="531"/>
    </location>
</feature>
<feature type="strand" evidence="11">
    <location>
        <begin position="533"/>
        <end position="535"/>
    </location>
</feature>
<feature type="strand" evidence="11">
    <location>
        <begin position="537"/>
        <end position="539"/>
    </location>
</feature>
<feature type="helix" evidence="11">
    <location>
        <begin position="550"/>
        <end position="567"/>
    </location>
</feature>
<feature type="helix" evidence="11">
    <location>
        <begin position="570"/>
        <end position="572"/>
    </location>
</feature>
<feature type="helix" evidence="11">
    <location>
        <begin position="582"/>
        <end position="589"/>
    </location>
</feature>
<feature type="helix" evidence="11">
    <location>
        <begin position="597"/>
        <end position="601"/>
    </location>
</feature>
<feature type="helix" evidence="11">
    <location>
        <begin position="603"/>
        <end position="615"/>
    </location>
</feature>
<feature type="turn" evidence="11">
    <location>
        <begin position="619"/>
        <end position="621"/>
    </location>
</feature>
<feature type="strand" evidence="11">
    <location>
        <begin position="624"/>
        <end position="630"/>
    </location>
</feature>
<feature type="strand" evidence="12">
    <location>
        <begin position="632"/>
        <end position="634"/>
    </location>
</feature>
<feature type="strand" evidence="11">
    <location>
        <begin position="636"/>
        <end position="643"/>
    </location>
</feature>
<feature type="helix" evidence="11">
    <location>
        <begin position="646"/>
        <end position="648"/>
    </location>
</feature>
<feature type="turn" evidence="11">
    <location>
        <begin position="653"/>
        <end position="655"/>
    </location>
</feature>
<feature type="helix" evidence="11">
    <location>
        <begin position="656"/>
        <end position="668"/>
    </location>
</feature>
<feature type="helix" evidence="11">
    <location>
        <begin position="670"/>
        <end position="672"/>
    </location>
</feature>
<feature type="helix" evidence="11">
    <location>
        <begin position="673"/>
        <end position="686"/>
    </location>
</feature>
<feature type="helix" evidence="11">
    <location>
        <begin position="689"/>
        <end position="692"/>
    </location>
</feature>
<feature type="helix" evidence="11">
    <location>
        <begin position="697"/>
        <end position="705"/>
    </location>
</feature>
<feature type="helix" evidence="11">
    <location>
        <begin position="712"/>
        <end position="718"/>
    </location>
</feature>
<feature type="strand" evidence="11">
    <location>
        <begin position="720"/>
        <end position="723"/>
    </location>
</feature>
<feature type="helix" evidence="11">
    <location>
        <begin position="726"/>
        <end position="730"/>
    </location>
</feature>
<feature type="helix" evidence="11">
    <location>
        <begin position="732"/>
        <end position="742"/>
    </location>
</feature>
<feature type="helix" evidence="11">
    <location>
        <begin position="745"/>
        <end position="756"/>
    </location>
</feature>
<feature type="strand" evidence="11">
    <location>
        <begin position="757"/>
        <end position="760"/>
    </location>
</feature>
<feature type="helix" evidence="11">
    <location>
        <begin position="765"/>
        <end position="768"/>
    </location>
</feature>
<feature type="strand" evidence="11">
    <location>
        <begin position="774"/>
        <end position="782"/>
    </location>
</feature>
<feature type="strand" evidence="12">
    <location>
        <begin position="786"/>
        <end position="788"/>
    </location>
</feature>
<feature type="helix" evidence="11">
    <location>
        <begin position="789"/>
        <end position="791"/>
    </location>
</feature>
<feature type="strand" evidence="11">
    <location>
        <begin position="794"/>
        <end position="798"/>
    </location>
</feature>
<feature type="helix" evidence="11">
    <location>
        <begin position="802"/>
        <end position="812"/>
    </location>
</feature>
<accession>O15033</accession>
<accession>B4E2C7</accession>
<accession>Q7LDY1</accession>
<accession>Q8IYY9</accession>
<keyword id="KW-0002">3D-structure</keyword>
<keyword id="KW-0025">Alternative splicing</keyword>
<keyword id="KW-0053">Apoptosis</keyword>
<keyword id="KW-1267">Proteomics identification</keyword>
<keyword id="KW-1185">Reference proteome</keyword>
<keyword id="KW-0808">Transferase</keyword>
<keyword id="KW-0832">Ubl conjugation</keyword>
<keyword id="KW-0833">Ubl conjugation pathway</keyword>
<organism>
    <name type="scientific">Homo sapiens</name>
    <name type="common">Human</name>
    <dbReference type="NCBI Taxonomy" id="9606"/>
    <lineage>
        <taxon>Eukaryota</taxon>
        <taxon>Metazoa</taxon>
        <taxon>Chordata</taxon>
        <taxon>Craniata</taxon>
        <taxon>Vertebrata</taxon>
        <taxon>Euteleostomi</taxon>
        <taxon>Mammalia</taxon>
        <taxon>Eutheria</taxon>
        <taxon>Euarchontoglires</taxon>
        <taxon>Primates</taxon>
        <taxon>Haplorrhini</taxon>
        <taxon>Catarrhini</taxon>
        <taxon>Hominidae</taxon>
        <taxon>Homo</taxon>
    </lineage>
</organism>